<comment type="function">
    <text evidence="1">PsaA and PsaB bind P700, the primary electron donor of photosystem I (PSI), as well as the electron acceptors A0, A1 and FX. PSI is a plastocyanin/cytochrome c6-ferredoxin oxidoreductase, converting photonic excitation into a charge separation, which transfers an electron from the donor P700 chlorophyll pair to the spectroscopically characterized acceptors A0, A1, FX, FA and FB in turn. Oxidized P700 is reduced on the lumenal side of the thylakoid membrane by plastocyanin or cytochrome c6.</text>
</comment>
<comment type="catalytic activity">
    <reaction evidence="1">
        <text>reduced [plastocyanin] + hnu + oxidized [2Fe-2S]-[ferredoxin] = oxidized [plastocyanin] + reduced [2Fe-2S]-[ferredoxin]</text>
        <dbReference type="Rhea" id="RHEA:30407"/>
        <dbReference type="Rhea" id="RHEA-COMP:10000"/>
        <dbReference type="Rhea" id="RHEA-COMP:10001"/>
        <dbReference type="Rhea" id="RHEA-COMP:10039"/>
        <dbReference type="Rhea" id="RHEA-COMP:10040"/>
        <dbReference type="ChEBI" id="CHEBI:29036"/>
        <dbReference type="ChEBI" id="CHEBI:30212"/>
        <dbReference type="ChEBI" id="CHEBI:33737"/>
        <dbReference type="ChEBI" id="CHEBI:33738"/>
        <dbReference type="ChEBI" id="CHEBI:49552"/>
        <dbReference type="EC" id="1.97.1.12"/>
    </reaction>
</comment>
<comment type="cofactor">
    <text evidence="1">PSI electron transfer chain: 5 divinyl chlorophyll a, 1 divinyl chlorophyll a', 2 phylloquinones and 3 4Fe-4S clusters. PSI core antenna: 90 divinyl chlorophyll a, 22 carotenoids, 3 phospholipids and 1 galactolipid. P700 is a divinyl chlorophyll a/divinyl chlorophyll a' dimer, A0 is one or more divinyl chlorophyll a, A1 is one or both phylloquinones and FX is a shared 4Fe-4S iron-sulfur center.</text>
</comment>
<comment type="subunit">
    <text evidence="1">The PsaA/B heterodimer binds the P700 divinyl chlorophyll special pair and subsequent electron acceptors. PSI consists of a core antenna complex that captures photons, and an electron transfer chain that converts photonic excitation into a charge separation. The cyanobacterial PSI reaction center is composed of one copy each of PsaA,B,C,D,E,F,I,J,K,L,M and X, and forms trimeric complexes.</text>
</comment>
<comment type="subcellular location">
    <subcellularLocation>
        <location evidence="1">Cellular thylakoid membrane</location>
        <topology evidence="1">Multi-pass membrane protein</topology>
    </subcellularLocation>
</comment>
<comment type="similarity">
    <text evidence="1">Belongs to the PsaA/PsaB family.</text>
</comment>
<organism>
    <name type="scientific">Prochlorococcus marinus (strain SARG / CCMP1375 / SS120)</name>
    <dbReference type="NCBI Taxonomy" id="167539"/>
    <lineage>
        <taxon>Bacteria</taxon>
        <taxon>Bacillati</taxon>
        <taxon>Cyanobacteriota</taxon>
        <taxon>Cyanophyceae</taxon>
        <taxon>Synechococcales</taxon>
        <taxon>Prochlorococcaceae</taxon>
        <taxon>Prochlorococcus</taxon>
    </lineage>
</organism>
<dbReference type="EC" id="1.97.1.12" evidence="1"/>
<dbReference type="EMBL" id="AJ133192">
    <property type="protein sequence ID" value="CAB64199.1"/>
    <property type="molecule type" value="Genomic_DNA"/>
</dbReference>
<dbReference type="EMBL" id="AE017126">
    <property type="protein sequence ID" value="AAQ00717.1"/>
    <property type="molecule type" value="Genomic_DNA"/>
</dbReference>
<dbReference type="RefSeq" id="NP_876064.1">
    <property type="nucleotide sequence ID" value="NC_005042.1"/>
</dbReference>
<dbReference type="RefSeq" id="WP_011125822.1">
    <property type="nucleotide sequence ID" value="NC_005042.1"/>
</dbReference>
<dbReference type="SMR" id="Q9RDV0"/>
<dbReference type="STRING" id="167539.Pro_1673"/>
<dbReference type="EnsemblBacteria" id="AAQ00717">
    <property type="protein sequence ID" value="AAQ00717"/>
    <property type="gene ID" value="Pro_1673"/>
</dbReference>
<dbReference type="KEGG" id="pma:Pro_1673"/>
<dbReference type="PATRIC" id="fig|167539.5.peg.1767"/>
<dbReference type="eggNOG" id="COG2885">
    <property type="taxonomic scope" value="Bacteria"/>
</dbReference>
<dbReference type="HOGENOM" id="CLU_016126_1_0_3"/>
<dbReference type="OrthoDB" id="499313at2"/>
<dbReference type="Proteomes" id="UP000001420">
    <property type="component" value="Chromosome"/>
</dbReference>
<dbReference type="GO" id="GO:0009522">
    <property type="term" value="C:photosystem I"/>
    <property type="evidence" value="ECO:0007669"/>
    <property type="project" value="UniProtKB-KW"/>
</dbReference>
<dbReference type="GO" id="GO:0031676">
    <property type="term" value="C:plasma membrane-derived thylakoid membrane"/>
    <property type="evidence" value="ECO:0007669"/>
    <property type="project" value="UniProtKB-SubCell"/>
</dbReference>
<dbReference type="GO" id="GO:0051539">
    <property type="term" value="F:4 iron, 4 sulfur cluster binding"/>
    <property type="evidence" value="ECO:0007669"/>
    <property type="project" value="UniProtKB-KW"/>
</dbReference>
<dbReference type="GO" id="GO:0016168">
    <property type="term" value="F:chlorophyll binding"/>
    <property type="evidence" value="ECO:0007669"/>
    <property type="project" value="UniProtKB-KW"/>
</dbReference>
<dbReference type="GO" id="GO:0009055">
    <property type="term" value="F:electron transfer activity"/>
    <property type="evidence" value="ECO:0007669"/>
    <property type="project" value="UniProtKB-UniRule"/>
</dbReference>
<dbReference type="GO" id="GO:0000287">
    <property type="term" value="F:magnesium ion binding"/>
    <property type="evidence" value="ECO:0007669"/>
    <property type="project" value="UniProtKB-UniRule"/>
</dbReference>
<dbReference type="GO" id="GO:0016491">
    <property type="term" value="F:oxidoreductase activity"/>
    <property type="evidence" value="ECO:0007669"/>
    <property type="project" value="UniProtKB-KW"/>
</dbReference>
<dbReference type="GO" id="GO:0015979">
    <property type="term" value="P:photosynthesis"/>
    <property type="evidence" value="ECO:0007669"/>
    <property type="project" value="UniProtKB-UniRule"/>
</dbReference>
<dbReference type="FunFam" id="1.20.1130.10:FF:000001">
    <property type="entry name" value="Photosystem I P700 chlorophyll a apoprotein A2"/>
    <property type="match status" value="1"/>
</dbReference>
<dbReference type="Gene3D" id="1.20.1130.10">
    <property type="entry name" value="Photosystem I PsaA/PsaB"/>
    <property type="match status" value="1"/>
</dbReference>
<dbReference type="HAMAP" id="MF_00482">
    <property type="entry name" value="PSI_PsaB"/>
    <property type="match status" value="1"/>
</dbReference>
<dbReference type="InterPro" id="IPR001280">
    <property type="entry name" value="PSI_PsaA/B"/>
</dbReference>
<dbReference type="InterPro" id="IPR020586">
    <property type="entry name" value="PSI_PsaA/B_CS"/>
</dbReference>
<dbReference type="InterPro" id="IPR036408">
    <property type="entry name" value="PSI_PsaA/B_sf"/>
</dbReference>
<dbReference type="InterPro" id="IPR006244">
    <property type="entry name" value="PSI_PsaB"/>
</dbReference>
<dbReference type="NCBIfam" id="TIGR01336">
    <property type="entry name" value="psaB"/>
    <property type="match status" value="1"/>
</dbReference>
<dbReference type="PANTHER" id="PTHR30128">
    <property type="entry name" value="OUTER MEMBRANE PROTEIN, OMPA-RELATED"/>
    <property type="match status" value="1"/>
</dbReference>
<dbReference type="PANTHER" id="PTHR30128:SF19">
    <property type="entry name" value="PHOTOSYSTEM I P700 CHLOROPHYLL A APOPROTEIN A1-RELATED"/>
    <property type="match status" value="1"/>
</dbReference>
<dbReference type="Pfam" id="PF00223">
    <property type="entry name" value="PsaA_PsaB"/>
    <property type="match status" value="1"/>
</dbReference>
<dbReference type="PIRSF" id="PIRSF002905">
    <property type="entry name" value="PSI_A"/>
    <property type="match status" value="1"/>
</dbReference>
<dbReference type="PRINTS" id="PR00257">
    <property type="entry name" value="PHOTSYSPSAAB"/>
</dbReference>
<dbReference type="SUPFAM" id="SSF81558">
    <property type="entry name" value="Photosystem I subunits PsaA/PsaB"/>
    <property type="match status" value="1"/>
</dbReference>
<dbReference type="PROSITE" id="PS00419">
    <property type="entry name" value="PHOTOSYSTEM_I_PSAAB"/>
    <property type="match status" value="1"/>
</dbReference>
<feature type="chain" id="PRO_0000088647" description="Photosystem I P700 chlorophyll a apoprotein A2">
    <location>
        <begin position="1"/>
        <end position="747"/>
    </location>
</feature>
<feature type="transmembrane region" description="Helical; Name=I" evidence="1">
    <location>
        <begin position="46"/>
        <end position="69"/>
    </location>
</feature>
<feature type="transmembrane region" description="Helical; Name=II" evidence="1">
    <location>
        <begin position="135"/>
        <end position="158"/>
    </location>
</feature>
<feature type="transmembrane region" description="Helical; Name=III" evidence="1">
    <location>
        <begin position="175"/>
        <end position="199"/>
    </location>
</feature>
<feature type="transmembrane region" description="Helical; Name=IV" evidence="1">
    <location>
        <begin position="273"/>
        <end position="291"/>
    </location>
</feature>
<feature type="transmembrane region" description="Helical; Name=V" evidence="1">
    <location>
        <begin position="341"/>
        <end position="364"/>
    </location>
</feature>
<feature type="transmembrane region" description="Helical; Name=VI" evidence="1">
    <location>
        <begin position="380"/>
        <end position="406"/>
    </location>
</feature>
<feature type="transmembrane region" description="Helical; Name=VII" evidence="1">
    <location>
        <begin position="428"/>
        <end position="450"/>
    </location>
</feature>
<feature type="transmembrane region" description="Helical; Name=VIII" evidence="1">
    <location>
        <begin position="530"/>
        <end position="548"/>
    </location>
</feature>
<feature type="transmembrane region" description="Helical; Name=IX" evidence="1">
    <location>
        <begin position="588"/>
        <end position="609"/>
    </location>
</feature>
<feature type="transmembrane region" description="Helical; Name=X" evidence="1">
    <location>
        <begin position="656"/>
        <end position="678"/>
    </location>
</feature>
<feature type="transmembrane region" description="Helical; Name=XI" evidence="1">
    <location>
        <begin position="720"/>
        <end position="740"/>
    </location>
</feature>
<feature type="binding site" evidence="1">
    <location>
        <position position="572"/>
    </location>
    <ligand>
        <name>[4Fe-4S] cluster</name>
        <dbReference type="ChEBI" id="CHEBI:49883"/>
        <note>ligand shared between dimeric partners</note>
    </ligand>
</feature>
<feature type="binding site" evidence="1">
    <location>
        <position position="581"/>
    </location>
    <ligand>
        <name>[4Fe-4S] cluster</name>
        <dbReference type="ChEBI" id="CHEBI:49883"/>
        <note>ligand shared between dimeric partners</note>
    </ligand>
</feature>
<feature type="binding site" description="axial binding residue" evidence="1">
    <location>
        <position position="667"/>
    </location>
    <ligand>
        <name>divinyl chlorophyll a</name>
        <dbReference type="ChEBI" id="CHEBI:73095"/>
        <label>B1</label>
    </ligand>
    <ligandPart>
        <name>Mg</name>
        <dbReference type="ChEBI" id="CHEBI:25107"/>
    </ligandPart>
</feature>
<feature type="binding site" description="axial binding residue" evidence="1">
    <location>
        <position position="675"/>
    </location>
    <ligand>
        <name>divinyl chlorophyll a</name>
        <dbReference type="ChEBI" id="CHEBI:73095"/>
        <label>B3</label>
    </ligand>
    <ligandPart>
        <name>Mg</name>
        <dbReference type="ChEBI" id="CHEBI:25107"/>
    </ligandPart>
</feature>
<feature type="binding site" evidence="1">
    <location>
        <position position="683"/>
    </location>
    <ligand>
        <name>divinyl chlorophyll a</name>
        <dbReference type="ChEBI" id="CHEBI:73095"/>
        <label>B3</label>
    </ligand>
</feature>
<feature type="binding site" evidence="1">
    <location>
        <position position="684"/>
    </location>
    <ligand>
        <name>phylloquinone</name>
        <dbReference type="ChEBI" id="CHEBI:18067"/>
        <label>B</label>
    </ligand>
</feature>
<name>PSAB_PROMA</name>
<sequence>MATKFPSFNQGLAQDPTTRRIWYGIATAHDFESHDGMTEEQLYQKLFATHFGHLAIIGLWVAGNLFHIAWQGNFEQWVTDPLHIRPIAHAIWDPHFGQGITDALTQAGATSPVNIAYSGLYHWWYTIGMRTNAQLFQGAIFLNILVCWLLFAGWLHLQPKFRPSLAWFKNAEAQLNHHLAVLFGFSSIAWTGHLVHVAIPESRGQHVGWDNWLSVLPHPQGLAPFFSLNWGAYAQNPDSLDAVFGTSQGAGTAIFTFLGGLHPQSESLWLTDIAHHHLAIGVMFIIAGHMYRNTFGIGHTLKEITEAHNTDNPNDPHTTAKDGRHFGVNHNGIFETVNNSLHFQLGLALASLGAACSLVAQHMGALPSYAFIARDYTTQSALYTHHQYIAMFLMVGAFSHGAIFFVRDYDPELNKGNVLARVLETKEALISHLSWVTMLLGFHTLGIYVHNDVVVAFGNPEKQILVEPVFAQAIQAFSGKVMYGINALLANANSSATLAANSMPGNHYWMDMINRQDALTNFLPIGPADFLVHHAIALGLHTTALILIKGALDARGSKLIPDKKDFGYAFPCDGPGRGGTCDSSAWDATYLAMFWALNTIAWITFYWHWKHLAIWQGNVAQFNESGTYLMGWFRDYLWLNSSQLINGYNPFGVNALSPWAWMFLFGHLIWATGFMFLISWRGYWQELIETLVWAHQRTPIANLVGWRDKPVALSIVQARLVGLTHFTVGNFVTFGAFVIASTSGKFG</sequence>
<proteinExistence type="inferred from homology"/>
<evidence type="ECO:0000255" key="1">
    <source>
        <dbReference type="HAMAP-Rule" id="MF_00482"/>
    </source>
</evidence>
<accession>Q9RDV0</accession>
<reference key="1">
    <citation type="journal article" date="2000" name="Photosyn. Res.">
        <title>Rapid evolutionary divergence of photosystem I core subunits PsaA and PsaB in the marine prokaryote Prochlorococcus.</title>
        <authorList>
            <person name="van der Staay G.W.M."/>
            <person name="Moon-van der Staay S.Y."/>
            <person name="Garczarek L."/>
            <person name="Partensky F."/>
        </authorList>
    </citation>
    <scope>NUCLEOTIDE SEQUENCE [GENOMIC DNA]</scope>
    <source>
        <strain>SARG / CCMP1375 / SS120</strain>
    </source>
</reference>
<reference key="2">
    <citation type="journal article" date="2003" name="Proc. Natl. Acad. Sci. U.S.A.">
        <title>Genome sequence of the cyanobacterium Prochlorococcus marinus SS120, a nearly minimal oxyphototrophic genome.</title>
        <authorList>
            <person name="Dufresne A."/>
            <person name="Salanoubat M."/>
            <person name="Partensky F."/>
            <person name="Artiguenave F."/>
            <person name="Axmann I.M."/>
            <person name="Barbe V."/>
            <person name="Duprat S."/>
            <person name="Galperin M.Y."/>
            <person name="Koonin E.V."/>
            <person name="Le Gall F."/>
            <person name="Makarova K.S."/>
            <person name="Ostrowski M."/>
            <person name="Oztas S."/>
            <person name="Robert C."/>
            <person name="Rogozin I.B."/>
            <person name="Scanlan D.J."/>
            <person name="Tandeau de Marsac N."/>
            <person name="Weissenbach J."/>
            <person name="Wincker P."/>
            <person name="Wolf Y.I."/>
            <person name="Hess W.R."/>
        </authorList>
    </citation>
    <scope>NUCLEOTIDE SEQUENCE [LARGE SCALE GENOMIC DNA]</scope>
    <source>
        <strain>SARG / CCMP1375 / SS120</strain>
    </source>
</reference>
<protein>
    <recommendedName>
        <fullName evidence="1">Photosystem I P700 chlorophyll a apoprotein A2</fullName>
        <ecNumber evidence="1">1.97.1.12</ecNumber>
    </recommendedName>
    <alternativeName>
        <fullName evidence="1">PsaB</fullName>
    </alternativeName>
</protein>
<keyword id="KW-0004">4Fe-4S</keyword>
<keyword id="KW-0148">Chlorophyll</keyword>
<keyword id="KW-0157">Chromophore</keyword>
<keyword id="KW-0249">Electron transport</keyword>
<keyword id="KW-0408">Iron</keyword>
<keyword id="KW-0411">Iron-sulfur</keyword>
<keyword id="KW-0460">Magnesium</keyword>
<keyword id="KW-0472">Membrane</keyword>
<keyword id="KW-0479">Metal-binding</keyword>
<keyword id="KW-0560">Oxidoreductase</keyword>
<keyword id="KW-0602">Photosynthesis</keyword>
<keyword id="KW-0603">Photosystem I</keyword>
<keyword id="KW-1185">Reference proteome</keyword>
<keyword id="KW-0793">Thylakoid</keyword>
<keyword id="KW-0812">Transmembrane</keyword>
<keyword id="KW-1133">Transmembrane helix</keyword>
<keyword id="KW-0813">Transport</keyword>
<gene>
    <name evidence="1" type="primary">psaB</name>
    <name type="ordered locus">Pro_1673</name>
</gene>